<reference key="1">
    <citation type="journal article" date="1999" name="Mol. Biol. Evol.">
        <title>Molecular evolution of the COX7A gene family in primates.</title>
        <authorList>
            <person name="Schmidt T.R."/>
            <person name="Goodman M."/>
            <person name="Grossman L.I."/>
        </authorList>
    </citation>
    <scope>NUCLEOTIDE SEQUENCE [GENOMIC DNA]</scope>
</reference>
<comment type="function">
    <text evidence="2 3 4">Component of the mitochondrial respiratory complex IV (CIV, also named cytochrome c oxidase complex), the last enzyme in the mitochondrial electron transport chain which drives oxidative phosphorylation (By similarity). The CIV complex is the component of the respiratory chain that catalyzes the reduction of oxygen to water (By similarity). Acts as an assembly factor that specifically drives the homodimerization of CIV complexes, mediating the formation of mitochondrial respiratory supercomplexes (respirasomes) containing two CIV: supercomplxes with two molecules of CIV show improved activity (By similarity). Despite being highly expressed in brown adipose tissue, not required for thermogenesis (By similarity).</text>
</comment>
<comment type="pathway">
    <text evidence="3">Energy metabolism; oxidative phosphorylation.</text>
</comment>
<comment type="subunit">
    <text evidence="1">Component of the complex IV (CIV, cytochrome c oxidase), a multisubunit enzyme composed of 14 subunits. The complex is composed of a catalytic core of 3 subunits MT-CO1, MT-CO2 and MT-CO3, encoded in the mitochondrial DNA, and 11 supernumerary subunits COX4I1 (or COX4I2), COX5A, COX5B, COX6A2 (or COX6A1), COX6B1 (or COX6B2), COX6C, COX7A1 (or COX7A2), COX7B, COX7C, COX8B and NDUFA4, which are encoded in the nuclear genome. The complex exists as a monomer or a dimer and forms supercomplexes (SCs) in the inner mitochondrial membrane with NADH-ubiquinone oxidoreductase (complex I, CI) and ubiquinol-cytochrome c oxidoreductase (cytochrome b-c1 complex, complex III, CIII), resulting in different assemblies (supercomplex SCI(1)III(2)IV(1) and megacomplex MCI(2)III(2)IV(2)).</text>
</comment>
<comment type="subcellular location">
    <subcellularLocation>
        <location evidence="1">Mitochondrion inner membrane</location>
        <topology evidence="1">Single-pass membrane protein</topology>
    </subcellularLocation>
</comment>
<comment type="similarity">
    <text evidence="5">Belongs to the cytochrome c oxidase VIIa family.</text>
</comment>
<gene>
    <name type="primary">COX7A1</name>
</gene>
<organism>
    <name type="scientific">Trachypithecus cristatus</name>
    <name type="common">Silvered leaf-monkey</name>
    <name type="synonym">Presbytis cristata</name>
    <dbReference type="NCBI Taxonomy" id="122765"/>
    <lineage>
        <taxon>Eukaryota</taxon>
        <taxon>Metazoa</taxon>
        <taxon>Chordata</taxon>
        <taxon>Craniata</taxon>
        <taxon>Vertebrata</taxon>
        <taxon>Euteleostomi</taxon>
        <taxon>Mammalia</taxon>
        <taxon>Eutheria</taxon>
        <taxon>Euarchontoglires</taxon>
        <taxon>Primates</taxon>
        <taxon>Haplorrhini</taxon>
        <taxon>Catarrhini</taxon>
        <taxon>Cercopithecidae</taxon>
        <taxon>Colobinae</taxon>
        <taxon>Trachypithecus</taxon>
    </lineage>
</organism>
<sequence>MQALRVSRALIRSFNTTARNRFQNRVPEKQKLFQEDNDIPLYLKGGIVDNILYRVTMGLCLGGSAYSMYCLGWASFPRN</sequence>
<evidence type="ECO:0000250" key="1">
    <source>
        <dbReference type="UniProtKB" id="P07470"/>
    </source>
</evidence>
<evidence type="ECO:0000250" key="2">
    <source>
        <dbReference type="UniProtKB" id="P10174"/>
    </source>
</evidence>
<evidence type="ECO:0000250" key="3">
    <source>
        <dbReference type="UniProtKB" id="P56392"/>
    </source>
</evidence>
<evidence type="ECO:0000250" key="4">
    <source>
        <dbReference type="UniProtKB" id="Q08CE7"/>
    </source>
</evidence>
<evidence type="ECO:0000305" key="5"/>
<name>CX7A1_TRACR</name>
<keyword id="KW-0472">Membrane</keyword>
<keyword id="KW-0496">Mitochondrion</keyword>
<keyword id="KW-0999">Mitochondrion inner membrane</keyword>
<keyword id="KW-0560">Oxidoreductase</keyword>
<keyword id="KW-0809">Transit peptide</keyword>
<keyword id="KW-0812">Transmembrane</keyword>
<keyword id="KW-1133">Transmembrane helix</keyword>
<feature type="transit peptide" description="Mitochondrion" evidence="1">
    <location>
        <begin position="1"/>
        <end position="21"/>
    </location>
</feature>
<feature type="chain" id="PRO_0000006151" description="Cytochrome c oxidase subunit 7A1, mitochondrial">
    <location>
        <begin position="22"/>
        <end position="79"/>
    </location>
</feature>
<feature type="topological domain" description="Mitochondrial matrix" evidence="1">
    <location>
        <begin position="22"/>
        <end position="46"/>
    </location>
</feature>
<feature type="transmembrane region" description="Helical" evidence="1">
    <location>
        <begin position="47"/>
        <end position="75"/>
    </location>
</feature>
<feature type="topological domain" description="Mitochondrial intermembrane" evidence="1">
    <location>
        <begin position="76"/>
        <end position="79"/>
    </location>
</feature>
<accession>Q9N234</accession>
<dbReference type="EMBL" id="AF127787">
    <property type="protein sequence ID" value="AAF72745.1"/>
    <property type="molecule type" value="Genomic_DNA"/>
</dbReference>
<dbReference type="SMR" id="Q9N234"/>
<dbReference type="UniPathway" id="UPA00705"/>
<dbReference type="GO" id="GO:0005743">
    <property type="term" value="C:mitochondrial inner membrane"/>
    <property type="evidence" value="ECO:0007669"/>
    <property type="project" value="UniProtKB-SubCell"/>
</dbReference>
<dbReference type="GO" id="GO:0045277">
    <property type="term" value="C:respiratory chain complex IV"/>
    <property type="evidence" value="ECO:0007669"/>
    <property type="project" value="InterPro"/>
</dbReference>
<dbReference type="GO" id="GO:0016491">
    <property type="term" value="F:oxidoreductase activity"/>
    <property type="evidence" value="ECO:0007669"/>
    <property type="project" value="UniProtKB-KW"/>
</dbReference>
<dbReference type="GO" id="GO:0006123">
    <property type="term" value="P:mitochondrial electron transport, cytochrome c to oxygen"/>
    <property type="evidence" value="ECO:0007669"/>
    <property type="project" value="InterPro"/>
</dbReference>
<dbReference type="GO" id="GO:0097250">
    <property type="term" value="P:mitochondrial respirasome assembly"/>
    <property type="evidence" value="ECO:0000250"/>
    <property type="project" value="UniProtKB"/>
</dbReference>
<dbReference type="GO" id="GO:0002082">
    <property type="term" value="P:regulation of oxidative phosphorylation"/>
    <property type="evidence" value="ECO:0007669"/>
    <property type="project" value="TreeGrafter"/>
</dbReference>
<dbReference type="CDD" id="cd00928">
    <property type="entry name" value="Cyt_c_Oxidase_VIIa"/>
    <property type="match status" value="1"/>
</dbReference>
<dbReference type="FunFam" id="4.10.91.10:FF:000001">
    <property type="entry name" value="Cytochrome c oxidase subunit 7A1, mitochondrial"/>
    <property type="match status" value="1"/>
</dbReference>
<dbReference type="Gene3D" id="4.10.91.10">
    <property type="entry name" value="Cytochrome c oxidase, subunit VIIa"/>
    <property type="match status" value="1"/>
</dbReference>
<dbReference type="InterPro" id="IPR039297">
    <property type="entry name" value="COX7a"/>
</dbReference>
<dbReference type="InterPro" id="IPR036539">
    <property type="entry name" value="Cyt_c_oxidase_su7a_sf"/>
</dbReference>
<dbReference type="InterPro" id="IPR003177">
    <property type="entry name" value="Cytc_oxidase_su7a_met"/>
</dbReference>
<dbReference type="PANTHER" id="PTHR10510">
    <property type="entry name" value="CYTOCHROME C OXIDASE POLYPEPTIDE 7A"/>
    <property type="match status" value="1"/>
</dbReference>
<dbReference type="PANTHER" id="PTHR10510:SF5">
    <property type="entry name" value="CYTOCHROME C OXIDASE SUBUNIT 7A1, MITOCHONDRIAL"/>
    <property type="match status" value="1"/>
</dbReference>
<dbReference type="Pfam" id="PF02238">
    <property type="entry name" value="COX7a"/>
    <property type="match status" value="1"/>
</dbReference>
<dbReference type="SUPFAM" id="SSF81419">
    <property type="entry name" value="Mitochondrial cytochrome c oxidase subunit VIIa"/>
    <property type="match status" value="1"/>
</dbReference>
<proteinExistence type="inferred from homology"/>
<protein>
    <recommendedName>
        <fullName>Cytochrome c oxidase subunit 7A1, mitochondrial</fullName>
    </recommendedName>
    <alternativeName>
        <fullName>Cytochrome c oxidase subunit VIIa-heart</fullName>
        <shortName>Cytochrome c oxidase subunit VIIa-H</shortName>
    </alternativeName>
</protein>